<accession>Q5PGX0</accession>
<feature type="chain" id="PRO_0000161508" description="tRNA uridine(34) hydroxylase">
    <location>
        <begin position="1"/>
        <end position="350"/>
    </location>
</feature>
<feature type="domain" description="Rhodanese" evidence="1">
    <location>
        <begin position="146"/>
        <end position="240"/>
    </location>
</feature>
<feature type="region of interest" description="Disordered" evidence="2">
    <location>
        <begin position="319"/>
        <end position="350"/>
    </location>
</feature>
<feature type="compositionally biased region" description="Basic and acidic residues" evidence="2">
    <location>
        <begin position="319"/>
        <end position="328"/>
    </location>
</feature>
<feature type="active site" description="Cysteine persulfide intermediate" evidence="1">
    <location>
        <position position="200"/>
    </location>
</feature>
<proteinExistence type="inferred from homology"/>
<sequence>MPVLHNRISNDELKAKMLAESEPRTTISFYKYFTIASPQQTRDALYQVFTALDVFGRVYLAHEGINAQISVPQSKVETFRQQLYTFDPALDGLRLNIALEDDGKSFWVLRMKVRDRIVADGIDDPTFDASNVGDYLKAADVNAMLDDPDAVFIDMRNHYEYEVGHFENALEIPADTFREQLPKAVEMLREHADKKIVMYCTGGIRCEKASAWMKHNGFNKVWHIEGGIIEYARRAREQGLPVRFIGKNFVFDERMGERISDEVIAHCHQCGAPCDSHTNCKNDGCHLLFIQCPQCASKFNGCCSEQCCEELALPEEEQRRRRAGRENGNKIFNKSRGRLNSKLSIPDPAE</sequence>
<comment type="function">
    <text evidence="1">Catalyzes oxygen-dependent 5-hydroxyuridine (ho5U) modification at position 34 in tRNAs.</text>
</comment>
<comment type="catalytic activity">
    <reaction evidence="1">
        <text>uridine(34) in tRNA + AH2 + O2 = 5-hydroxyuridine(34) in tRNA + A + H2O</text>
        <dbReference type="Rhea" id="RHEA:64224"/>
        <dbReference type="Rhea" id="RHEA-COMP:11727"/>
        <dbReference type="Rhea" id="RHEA-COMP:13381"/>
        <dbReference type="ChEBI" id="CHEBI:13193"/>
        <dbReference type="ChEBI" id="CHEBI:15377"/>
        <dbReference type="ChEBI" id="CHEBI:15379"/>
        <dbReference type="ChEBI" id="CHEBI:17499"/>
        <dbReference type="ChEBI" id="CHEBI:65315"/>
        <dbReference type="ChEBI" id="CHEBI:136877"/>
    </reaction>
</comment>
<comment type="similarity">
    <text evidence="1">Belongs to the TrhO family.</text>
</comment>
<evidence type="ECO:0000255" key="1">
    <source>
        <dbReference type="HAMAP-Rule" id="MF_00469"/>
    </source>
</evidence>
<evidence type="ECO:0000256" key="2">
    <source>
        <dbReference type="SAM" id="MobiDB-lite"/>
    </source>
</evidence>
<protein>
    <recommendedName>
        <fullName evidence="1">tRNA uridine(34) hydroxylase</fullName>
        <ecNumber evidence="1">1.14.-.-</ecNumber>
    </recommendedName>
    <alternativeName>
        <fullName evidence="1">tRNA hydroxylation protein O</fullName>
    </alternativeName>
</protein>
<organism>
    <name type="scientific">Salmonella paratyphi A (strain ATCC 9150 / SARB42)</name>
    <dbReference type="NCBI Taxonomy" id="295319"/>
    <lineage>
        <taxon>Bacteria</taxon>
        <taxon>Pseudomonadati</taxon>
        <taxon>Pseudomonadota</taxon>
        <taxon>Gammaproteobacteria</taxon>
        <taxon>Enterobacterales</taxon>
        <taxon>Enterobacteriaceae</taxon>
        <taxon>Salmonella</taxon>
    </lineage>
</organism>
<gene>
    <name evidence="1" type="primary">trhO</name>
    <name type="synonym">yceA</name>
    <name type="ordered locus">SPA1695</name>
</gene>
<name>TRHO_SALPA</name>
<reference key="1">
    <citation type="journal article" date="2004" name="Nat. Genet.">
        <title>Comparison of genome degradation in Paratyphi A and Typhi, human-restricted serovars of Salmonella enterica that cause typhoid.</title>
        <authorList>
            <person name="McClelland M."/>
            <person name="Sanderson K.E."/>
            <person name="Clifton S.W."/>
            <person name="Latreille P."/>
            <person name="Porwollik S."/>
            <person name="Sabo A."/>
            <person name="Meyer R."/>
            <person name="Bieri T."/>
            <person name="Ozersky P."/>
            <person name="McLellan M."/>
            <person name="Harkins C.R."/>
            <person name="Wang C."/>
            <person name="Nguyen C."/>
            <person name="Berghoff A."/>
            <person name="Elliott G."/>
            <person name="Kohlberg S."/>
            <person name="Strong C."/>
            <person name="Du F."/>
            <person name="Carter J."/>
            <person name="Kremizki C."/>
            <person name="Layman D."/>
            <person name="Leonard S."/>
            <person name="Sun H."/>
            <person name="Fulton L."/>
            <person name="Nash W."/>
            <person name="Miner T."/>
            <person name="Minx P."/>
            <person name="Delehaunty K."/>
            <person name="Fronick C."/>
            <person name="Magrini V."/>
            <person name="Nhan M."/>
            <person name="Warren W."/>
            <person name="Florea L."/>
            <person name="Spieth J."/>
            <person name="Wilson R.K."/>
        </authorList>
    </citation>
    <scope>NUCLEOTIDE SEQUENCE [LARGE SCALE GENOMIC DNA]</scope>
    <source>
        <strain>ATCC 9150 / SARB42</strain>
    </source>
</reference>
<dbReference type="EC" id="1.14.-.-" evidence="1"/>
<dbReference type="EMBL" id="CP000026">
    <property type="protein sequence ID" value="AAV77619.1"/>
    <property type="molecule type" value="Genomic_DNA"/>
</dbReference>
<dbReference type="RefSeq" id="WP_001144637.1">
    <property type="nucleotide sequence ID" value="NC_006511.1"/>
</dbReference>
<dbReference type="SMR" id="Q5PGX0"/>
<dbReference type="KEGG" id="spt:SPA1695"/>
<dbReference type="HOGENOM" id="CLU_038878_1_1_6"/>
<dbReference type="Proteomes" id="UP000008185">
    <property type="component" value="Chromosome"/>
</dbReference>
<dbReference type="GO" id="GO:0016705">
    <property type="term" value="F:oxidoreductase activity, acting on paired donors, with incorporation or reduction of molecular oxygen"/>
    <property type="evidence" value="ECO:0007669"/>
    <property type="project" value="UniProtKB-UniRule"/>
</dbReference>
<dbReference type="GO" id="GO:0006400">
    <property type="term" value="P:tRNA modification"/>
    <property type="evidence" value="ECO:0007669"/>
    <property type="project" value="UniProtKB-UniRule"/>
</dbReference>
<dbReference type="CDD" id="cd01518">
    <property type="entry name" value="RHOD_YceA"/>
    <property type="match status" value="1"/>
</dbReference>
<dbReference type="Gene3D" id="3.30.70.100">
    <property type="match status" value="1"/>
</dbReference>
<dbReference type="Gene3D" id="3.40.250.10">
    <property type="entry name" value="Rhodanese-like domain"/>
    <property type="match status" value="1"/>
</dbReference>
<dbReference type="HAMAP" id="MF_00469">
    <property type="entry name" value="TrhO"/>
    <property type="match status" value="1"/>
</dbReference>
<dbReference type="InterPro" id="IPR001763">
    <property type="entry name" value="Rhodanese-like_dom"/>
</dbReference>
<dbReference type="InterPro" id="IPR036873">
    <property type="entry name" value="Rhodanese-like_dom_sf"/>
</dbReference>
<dbReference type="InterPro" id="IPR022111">
    <property type="entry name" value="Rhodanese_C"/>
</dbReference>
<dbReference type="InterPro" id="IPR020936">
    <property type="entry name" value="TrhO"/>
</dbReference>
<dbReference type="InterPro" id="IPR040503">
    <property type="entry name" value="TRHO_N"/>
</dbReference>
<dbReference type="NCBIfam" id="NF001133">
    <property type="entry name" value="PRK00142.1-1"/>
    <property type="match status" value="1"/>
</dbReference>
<dbReference type="PANTHER" id="PTHR43846:SF1">
    <property type="entry name" value="TRNA URIDINE(34) HYDROXYLASE"/>
    <property type="match status" value="1"/>
</dbReference>
<dbReference type="PANTHER" id="PTHR43846">
    <property type="entry name" value="UPF0176 PROTEIN YCEA"/>
    <property type="match status" value="1"/>
</dbReference>
<dbReference type="Pfam" id="PF00581">
    <property type="entry name" value="Rhodanese"/>
    <property type="match status" value="1"/>
</dbReference>
<dbReference type="Pfam" id="PF12368">
    <property type="entry name" value="Rhodanese_C"/>
    <property type="match status" value="1"/>
</dbReference>
<dbReference type="Pfam" id="PF17773">
    <property type="entry name" value="UPF0176_N"/>
    <property type="match status" value="1"/>
</dbReference>
<dbReference type="SMART" id="SM00450">
    <property type="entry name" value="RHOD"/>
    <property type="match status" value="1"/>
</dbReference>
<dbReference type="SUPFAM" id="SSF52821">
    <property type="entry name" value="Rhodanese/Cell cycle control phosphatase"/>
    <property type="match status" value="1"/>
</dbReference>
<dbReference type="PROSITE" id="PS50206">
    <property type="entry name" value="RHODANESE_3"/>
    <property type="match status" value="1"/>
</dbReference>
<keyword id="KW-0560">Oxidoreductase</keyword>
<keyword id="KW-0819">tRNA processing</keyword>